<sequence>MGLNVVHLVGRVGGDPEVRYFESGSVKCRLTLAVNRPSKDDQPDWFNLEIWGKTAQVAADYVRKGTLLGIKGSLKFDRWQDRNTGVDRSSPIILVERMDILSSKRDTDPNAVPAGYVPEI</sequence>
<organism>
    <name type="scientific">Thermosynechococcus vestitus (strain NIES-2133 / IAM M-273 / BP-1)</name>
    <dbReference type="NCBI Taxonomy" id="197221"/>
    <lineage>
        <taxon>Bacteria</taxon>
        <taxon>Bacillati</taxon>
        <taxon>Cyanobacteriota</taxon>
        <taxon>Cyanophyceae</taxon>
        <taxon>Acaryochloridales</taxon>
        <taxon>Thermosynechococcaceae</taxon>
        <taxon>Thermosynechococcus</taxon>
    </lineage>
</organism>
<keyword id="KW-0238">DNA-binding</keyword>
<keyword id="KW-1185">Reference proteome</keyword>
<name>SSB_THEVB</name>
<evidence type="ECO:0000255" key="1">
    <source>
        <dbReference type="HAMAP-Rule" id="MF_00984"/>
    </source>
</evidence>
<feature type="chain" id="PRO_0000096126" description="Single-stranded DNA-binding protein">
    <location>
        <begin position="1"/>
        <end position="120"/>
    </location>
</feature>
<feature type="domain" description="SSB" evidence="1">
    <location>
        <begin position="3"/>
        <end position="102"/>
    </location>
</feature>
<protein>
    <recommendedName>
        <fullName evidence="1">Single-stranded DNA-binding protein</fullName>
        <shortName evidence="1">SSB</shortName>
    </recommendedName>
</protein>
<proteinExistence type="inferred from homology"/>
<comment type="subunit">
    <text evidence="1">Homotetramer.</text>
</comment>
<gene>
    <name type="primary">ssb</name>
    <name type="ordered locus">tlr1490</name>
</gene>
<accession>Q8DIU1</accession>
<reference key="1">
    <citation type="journal article" date="2002" name="DNA Res.">
        <title>Complete genome structure of the thermophilic cyanobacterium Thermosynechococcus elongatus BP-1.</title>
        <authorList>
            <person name="Nakamura Y."/>
            <person name="Kaneko T."/>
            <person name="Sato S."/>
            <person name="Ikeuchi M."/>
            <person name="Katoh H."/>
            <person name="Sasamoto S."/>
            <person name="Watanabe A."/>
            <person name="Iriguchi M."/>
            <person name="Kawashima K."/>
            <person name="Kimura T."/>
            <person name="Kishida Y."/>
            <person name="Kiyokawa C."/>
            <person name="Kohara M."/>
            <person name="Matsumoto M."/>
            <person name="Matsuno A."/>
            <person name="Nakazaki N."/>
            <person name="Shimpo S."/>
            <person name="Sugimoto M."/>
            <person name="Takeuchi C."/>
            <person name="Yamada M."/>
            <person name="Tabata S."/>
        </authorList>
    </citation>
    <scope>NUCLEOTIDE SEQUENCE [LARGE SCALE GENOMIC DNA]</scope>
    <source>
        <strain>NIES-2133 / IAM M-273 / BP-1</strain>
    </source>
</reference>
<dbReference type="EMBL" id="BA000039">
    <property type="protein sequence ID" value="BAC09042.1"/>
    <property type="molecule type" value="Genomic_DNA"/>
</dbReference>
<dbReference type="RefSeq" id="NP_682280.1">
    <property type="nucleotide sequence ID" value="NC_004113.1"/>
</dbReference>
<dbReference type="RefSeq" id="WP_011057330.1">
    <property type="nucleotide sequence ID" value="NC_004113.1"/>
</dbReference>
<dbReference type="SMR" id="Q8DIU1"/>
<dbReference type="STRING" id="197221.gene:10748090"/>
<dbReference type="EnsemblBacteria" id="BAC09042">
    <property type="protein sequence ID" value="BAC09042"/>
    <property type="gene ID" value="BAC09042"/>
</dbReference>
<dbReference type="KEGG" id="tel:tlr1490"/>
<dbReference type="PATRIC" id="fig|197221.4.peg.1563"/>
<dbReference type="eggNOG" id="COG0629">
    <property type="taxonomic scope" value="Bacteria"/>
</dbReference>
<dbReference type="Proteomes" id="UP000000440">
    <property type="component" value="Chromosome"/>
</dbReference>
<dbReference type="GO" id="GO:0009295">
    <property type="term" value="C:nucleoid"/>
    <property type="evidence" value="ECO:0007669"/>
    <property type="project" value="TreeGrafter"/>
</dbReference>
<dbReference type="GO" id="GO:0003697">
    <property type="term" value="F:single-stranded DNA binding"/>
    <property type="evidence" value="ECO:0007669"/>
    <property type="project" value="UniProtKB-UniRule"/>
</dbReference>
<dbReference type="GO" id="GO:0006260">
    <property type="term" value="P:DNA replication"/>
    <property type="evidence" value="ECO:0007669"/>
    <property type="project" value="InterPro"/>
</dbReference>
<dbReference type="CDD" id="cd04496">
    <property type="entry name" value="SSB_OBF"/>
    <property type="match status" value="1"/>
</dbReference>
<dbReference type="Gene3D" id="2.40.50.140">
    <property type="entry name" value="Nucleic acid-binding proteins"/>
    <property type="match status" value="1"/>
</dbReference>
<dbReference type="HAMAP" id="MF_00984">
    <property type="entry name" value="SSB"/>
    <property type="match status" value="1"/>
</dbReference>
<dbReference type="InterPro" id="IPR012340">
    <property type="entry name" value="NA-bd_OB-fold"/>
</dbReference>
<dbReference type="InterPro" id="IPR000424">
    <property type="entry name" value="Primosome_PriB/ssb"/>
</dbReference>
<dbReference type="InterPro" id="IPR011344">
    <property type="entry name" value="ssDNA-bd"/>
</dbReference>
<dbReference type="NCBIfam" id="NF005674">
    <property type="entry name" value="PRK07459.1"/>
    <property type="match status" value="1"/>
</dbReference>
<dbReference type="NCBIfam" id="TIGR00621">
    <property type="entry name" value="ssb"/>
    <property type="match status" value="1"/>
</dbReference>
<dbReference type="PANTHER" id="PTHR10302">
    <property type="entry name" value="SINGLE-STRANDED DNA-BINDING PROTEIN"/>
    <property type="match status" value="1"/>
</dbReference>
<dbReference type="PANTHER" id="PTHR10302:SF0">
    <property type="entry name" value="SINGLE-STRANDED DNA-BINDING PROTEIN, MITOCHONDRIAL"/>
    <property type="match status" value="1"/>
</dbReference>
<dbReference type="Pfam" id="PF00436">
    <property type="entry name" value="SSB"/>
    <property type="match status" value="1"/>
</dbReference>
<dbReference type="PIRSF" id="PIRSF002070">
    <property type="entry name" value="SSB"/>
    <property type="match status" value="1"/>
</dbReference>
<dbReference type="SUPFAM" id="SSF50249">
    <property type="entry name" value="Nucleic acid-binding proteins"/>
    <property type="match status" value="1"/>
</dbReference>
<dbReference type="PROSITE" id="PS50935">
    <property type="entry name" value="SSB"/>
    <property type="match status" value="1"/>
</dbReference>